<sequence length="330" mass="37238">MVKKTKSNSLKKVATLALANLLLVGALTDNSAKAESKKDDTDLKLVSHNVYMLSTVLYPNWGQYKRADLIGQSSYIKNNDVVIFNEAFDNGASDKLLSNVKKEYPYQTPVLGRSQSGWDKTEGSYSSTVAEDGGVAIVSKYPIKEKIQHVFKSGCGFDNDSNKGFVYTKIEKNGKNVHVIGTHTQSEDSRCGAGHDRKIRAEQMKEISDFVKKKNIPKDETVYIGGDLNVNKGTPEFKDMLKNLNVNDVLYAGHNSTWDPQSNSIAKYNYPNGKPEHLDYIFTDKDHKQPKQLVNEVVTEKPKPWDVYAFPYYYVYNDFSDHYPIKAYSK</sequence>
<dbReference type="EC" id="3.1.4.3"/>
<dbReference type="EMBL" id="X61716">
    <property type="protein sequence ID" value="CAA43885.1"/>
    <property type="status" value="ALT_INIT"/>
    <property type="molecule type" value="Genomic_DNA"/>
</dbReference>
<dbReference type="EMBL" id="S72497">
    <property type="protein sequence ID" value="AAB32218.1"/>
    <property type="status" value="ALT_INIT"/>
    <property type="molecule type" value="Genomic_DNA"/>
</dbReference>
<dbReference type="PIR" id="S15324">
    <property type="entry name" value="S15324"/>
</dbReference>
<dbReference type="PDB" id="3I5V">
    <property type="method" value="X-ray"/>
    <property type="resolution" value="2.80 A"/>
    <property type="chains" value="A/B/C/D=35-330"/>
</dbReference>
<dbReference type="PDBsum" id="3I5V"/>
<dbReference type="SMR" id="P09978"/>
<dbReference type="DIP" id="DIP-59362N"/>
<dbReference type="OMA" id="GWDATGG"/>
<dbReference type="EvolutionaryTrace" id="P09978"/>
<dbReference type="GO" id="GO:0005576">
    <property type="term" value="C:extracellular region"/>
    <property type="evidence" value="ECO:0007669"/>
    <property type="project" value="InterPro"/>
</dbReference>
<dbReference type="GO" id="GO:0034480">
    <property type="term" value="F:phosphatidylcholine phospholipase C activity"/>
    <property type="evidence" value="ECO:0007669"/>
    <property type="project" value="UniProtKB-EC"/>
</dbReference>
<dbReference type="GO" id="GO:0004767">
    <property type="term" value="F:sphingomyelin phosphodiesterase activity"/>
    <property type="evidence" value="ECO:0007669"/>
    <property type="project" value="InterPro"/>
</dbReference>
<dbReference type="GO" id="GO:0090729">
    <property type="term" value="F:toxin activity"/>
    <property type="evidence" value="ECO:0007669"/>
    <property type="project" value="UniProtKB-KW"/>
</dbReference>
<dbReference type="GO" id="GO:0031640">
    <property type="term" value="P:killing of cells of another organism"/>
    <property type="evidence" value="ECO:0007669"/>
    <property type="project" value="UniProtKB-KW"/>
</dbReference>
<dbReference type="CDD" id="cd09078">
    <property type="entry name" value="nSMase"/>
    <property type="match status" value="1"/>
</dbReference>
<dbReference type="Gene3D" id="3.60.10.10">
    <property type="entry name" value="Endonuclease/exonuclease/phosphatase"/>
    <property type="match status" value="1"/>
</dbReference>
<dbReference type="InterPro" id="IPR036691">
    <property type="entry name" value="Endo/exonu/phosph_ase_sf"/>
</dbReference>
<dbReference type="InterPro" id="IPR005135">
    <property type="entry name" value="Endo/exonuclease/phosphatase"/>
</dbReference>
<dbReference type="InterPro" id="IPR038772">
    <property type="entry name" value="Sph/SMPD2-like"/>
</dbReference>
<dbReference type="InterPro" id="IPR017766">
    <property type="entry name" value="Sphingomyelinase/PLipase_C"/>
</dbReference>
<dbReference type="NCBIfam" id="TIGR03395">
    <property type="entry name" value="sphingomy"/>
    <property type="match status" value="1"/>
</dbReference>
<dbReference type="PANTHER" id="PTHR16320:SF23">
    <property type="entry name" value="SPHINGOMYELINASE C 1"/>
    <property type="match status" value="1"/>
</dbReference>
<dbReference type="PANTHER" id="PTHR16320">
    <property type="entry name" value="SPHINGOMYELINASE FAMILY MEMBER"/>
    <property type="match status" value="1"/>
</dbReference>
<dbReference type="Pfam" id="PF03372">
    <property type="entry name" value="Exo_endo_phos"/>
    <property type="match status" value="1"/>
</dbReference>
<dbReference type="SUPFAM" id="SSF56219">
    <property type="entry name" value="DNase I-like"/>
    <property type="match status" value="1"/>
</dbReference>
<gene>
    <name type="primary">hlb</name>
    <name type="synonym">plc</name>
</gene>
<feature type="signal peptide" evidence="1">
    <location>
        <begin position="1"/>
        <end position="34"/>
    </location>
</feature>
<feature type="chain" id="PRO_0000019903" description="Phospholipase C">
    <location>
        <begin position="35"/>
        <end position="330"/>
    </location>
</feature>
<feature type="disulfide bond" evidence="2">
    <location>
        <begin position="155"/>
        <end position="191"/>
    </location>
</feature>
<feature type="strand" evidence="4">
    <location>
        <begin position="45"/>
        <end position="49"/>
    </location>
</feature>
<feature type="turn" evidence="4">
    <location>
        <begin position="55"/>
        <end position="57"/>
    </location>
</feature>
<feature type="helix" evidence="4">
    <location>
        <begin position="63"/>
        <end position="71"/>
    </location>
</feature>
<feature type="strand" evidence="4">
    <location>
        <begin position="74"/>
        <end position="78"/>
    </location>
</feature>
<feature type="strand" evidence="4">
    <location>
        <begin position="80"/>
        <end position="85"/>
    </location>
</feature>
<feature type="helix" evidence="4">
    <location>
        <begin position="90"/>
        <end position="100"/>
    </location>
</feature>
<feature type="turn" evidence="4">
    <location>
        <begin position="101"/>
        <end position="103"/>
    </location>
</feature>
<feature type="turn" evidence="4">
    <location>
        <begin position="111"/>
        <end position="113"/>
    </location>
</feature>
<feature type="strand" evidence="4">
    <location>
        <begin position="119"/>
        <end position="124"/>
    </location>
</feature>
<feature type="strand" evidence="4">
    <location>
        <begin position="136"/>
        <end position="141"/>
    </location>
</feature>
<feature type="strand" evidence="4">
    <location>
        <begin position="143"/>
        <end position="150"/>
    </location>
</feature>
<feature type="helix" evidence="4">
    <location>
        <begin position="156"/>
        <end position="160"/>
    </location>
</feature>
<feature type="strand" evidence="4">
    <location>
        <begin position="164"/>
        <end position="172"/>
    </location>
</feature>
<feature type="strand" evidence="4">
    <location>
        <begin position="175"/>
        <end position="183"/>
    </location>
</feature>
<feature type="helix" evidence="4">
    <location>
        <begin position="195"/>
        <end position="212"/>
    </location>
</feature>
<feature type="turn" evidence="4">
    <location>
        <begin position="213"/>
        <end position="215"/>
    </location>
</feature>
<feature type="strand" evidence="4">
    <location>
        <begin position="222"/>
        <end position="227"/>
    </location>
</feature>
<feature type="strand" evidence="4">
    <location>
        <begin position="232"/>
        <end position="234"/>
    </location>
</feature>
<feature type="helix" evidence="4">
    <location>
        <begin position="235"/>
        <end position="243"/>
    </location>
</feature>
<feature type="strand" evidence="4">
    <location>
        <begin position="250"/>
        <end position="253"/>
    </location>
</feature>
<feature type="turn" evidence="4">
    <location>
        <begin position="260"/>
        <end position="262"/>
    </location>
</feature>
<feature type="helix" evidence="4">
    <location>
        <begin position="264"/>
        <end position="269"/>
    </location>
</feature>
<feature type="strand" evidence="4">
    <location>
        <begin position="279"/>
        <end position="284"/>
    </location>
</feature>
<feature type="strand" evidence="4">
    <location>
        <begin position="291"/>
        <end position="297"/>
    </location>
</feature>
<feature type="strand" evidence="4">
    <location>
        <begin position="305"/>
        <end position="307"/>
    </location>
</feature>
<feature type="strand" evidence="4">
    <location>
        <begin position="314"/>
        <end position="316"/>
    </location>
</feature>
<feature type="strand" evidence="4">
    <location>
        <begin position="319"/>
        <end position="322"/>
    </location>
</feature>
<feature type="strand" evidence="4">
    <location>
        <begin position="325"/>
        <end position="329"/>
    </location>
</feature>
<keyword id="KW-0002">3D-structure</keyword>
<keyword id="KW-0204">Cytolysis</keyword>
<keyword id="KW-1015">Disulfide bond</keyword>
<keyword id="KW-0354">Hemolysis</keyword>
<keyword id="KW-0378">Hydrolase</keyword>
<keyword id="KW-0732">Signal</keyword>
<keyword id="KW-0800">Toxin</keyword>
<keyword id="KW-0843">Virulence</keyword>
<protein>
    <recommendedName>
        <fullName>Phospholipase C</fullName>
        <ecNumber>3.1.4.3</ecNumber>
    </recommendedName>
    <alternativeName>
        <fullName>Beta-hemolysin</fullName>
    </alternativeName>
    <alternativeName>
        <fullName>Beta-toxin</fullName>
    </alternativeName>
    <alternativeName>
        <fullName>Sphingomyelinase</fullName>
        <shortName>SMase</shortName>
    </alternativeName>
</protein>
<organism>
    <name type="scientific">Staphylococcus aureus</name>
    <dbReference type="NCBI Taxonomy" id="1280"/>
    <lineage>
        <taxon>Bacteria</taxon>
        <taxon>Bacillati</taxon>
        <taxon>Bacillota</taxon>
        <taxon>Bacilli</taxon>
        <taxon>Bacillales</taxon>
        <taxon>Staphylococcaceae</taxon>
        <taxon>Staphylococcus</taxon>
    </lineage>
</organism>
<proteinExistence type="evidence at protein level"/>
<evidence type="ECO:0000250" key="1"/>
<evidence type="ECO:0000255" key="2"/>
<evidence type="ECO:0000305" key="3"/>
<evidence type="ECO:0007829" key="4">
    <source>
        <dbReference type="PDB" id="3I5V"/>
    </source>
</evidence>
<name>PHLC_STAAU</name>
<comment type="function">
    <text evidence="1">Bacterial hemolysins are exotoxins that attack blood cell membranes and cause cell rupture. Beta-hemolysin is a phospholipase C with specific activity toward sphingomyelins. Has a high specificity for sphingomyelin, hydrolyzes lysophosphatidylcholine at a much lower rate, but has no activity towards phosphatidylcholine, phosphatidylethanolamine, or phosphatidylserine (By similarity).</text>
</comment>
<comment type="catalytic activity">
    <reaction>
        <text>a 1,2-diacyl-sn-glycero-3-phosphocholine + H2O = phosphocholine + a 1,2-diacyl-sn-glycerol + H(+)</text>
        <dbReference type="Rhea" id="RHEA:10604"/>
        <dbReference type="ChEBI" id="CHEBI:15377"/>
        <dbReference type="ChEBI" id="CHEBI:15378"/>
        <dbReference type="ChEBI" id="CHEBI:17815"/>
        <dbReference type="ChEBI" id="CHEBI:57643"/>
        <dbReference type="ChEBI" id="CHEBI:295975"/>
        <dbReference type="EC" id="3.1.4.3"/>
    </reaction>
</comment>
<comment type="subunit">
    <text evidence="1">Monomer.</text>
</comment>
<comment type="similarity">
    <text evidence="3">Belongs to the neutral sphingomyelinase family.</text>
</comment>
<comment type="sequence caution" evidence="3">
    <conflict type="erroneous initiation">
        <sequence resource="EMBL-CDS" id="AAB32218"/>
    </conflict>
</comment>
<comment type="sequence caution" evidence="3">
    <conflict type="erroneous initiation">
        <sequence resource="EMBL-CDS" id="CAA43885"/>
    </conflict>
</comment>
<accession>P09978</accession>
<reference key="1">
    <citation type="journal article" date="1991" name="Mol. Microbiol.">
        <title>Insertional inactivation of the Staphylococcus aureus beta-toxin by bacteriophage phi 13 occurs by site- and orientation-specific integration of the phi 13 genome.</title>
        <authorList>
            <person name="Coleman D."/>
            <person name="Knights J."/>
            <person name="Russell R."/>
            <person name="Shanley D."/>
            <person name="Birkbeck T.H."/>
            <person name="Dougan G."/>
            <person name="Charles I."/>
        </authorList>
    </citation>
    <scope>NUCLEOTIDE SEQUENCE [GENOMIC DNA]</scope>
    <source>
        <strain>CN6708</strain>
    </source>
</reference>
<reference key="2">
    <citation type="journal article" date="1994" name="Zh. Mikrobiol. Epidemiol. Immunobiol.">
        <title>The cloning and expression of the gene for Staphylococcus aureus beta-hemolysin.</title>
        <authorList>
            <person name="Katerov V.E."/>
            <person name="Golubkov V.I."/>
            <person name="Totolian A.A."/>
            <person name="Shalen K."/>
            <person name="Ensen L."/>
            <person name="Mikula I."/>
            <person name="Smola I."/>
        </authorList>
    </citation>
    <scope>NUCLEOTIDE SEQUENCE [GENOMIC DNA]</scope>
</reference>